<name>Y4660_CUPPJ</name>
<keyword id="KW-0223">Dioxygenase</keyword>
<keyword id="KW-0408">Iron</keyword>
<keyword id="KW-0479">Metal-binding</keyword>
<keyword id="KW-0560">Oxidoreductase</keyword>
<keyword id="KW-0847">Vitamin C</keyword>
<comment type="cofactor">
    <cofactor evidence="1">
        <name>Fe(2+)</name>
        <dbReference type="ChEBI" id="CHEBI:29033"/>
    </cofactor>
    <text evidence="1">Binds 1 Fe(2+) ion per subunit.</text>
</comment>
<comment type="cofactor">
    <cofactor evidence="1">
        <name>L-ascorbate</name>
        <dbReference type="ChEBI" id="CHEBI:38290"/>
    </cofactor>
</comment>
<feature type="chain" id="PRO_0000346513" description="PKHD-type hydroxylase Reut_B4660">
    <location>
        <begin position="1"/>
        <end position="227"/>
    </location>
</feature>
<feature type="domain" description="Fe2OG dioxygenase" evidence="1">
    <location>
        <begin position="78"/>
        <end position="178"/>
    </location>
</feature>
<feature type="binding site" evidence="1">
    <location>
        <position position="96"/>
    </location>
    <ligand>
        <name>Fe cation</name>
        <dbReference type="ChEBI" id="CHEBI:24875"/>
    </ligand>
</feature>
<feature type="binding site" evidence="1">
    <location>
        <position position="98"/>
    </location>
    <ligand>
        <name>Fe cation</name>
        <dbReference type="ChEBI" id="CHEBI:24875"/>
    </ligand>
</feature>
<feature type="binding site" evidence="1">
    <location>
        <position position="159"/>
    </location>
    <ligand>
        <name>Fe cation</name>
        <dbReference type="ChEBI" id="CHEBI:24875"/>
    </ligand>
</feature>
<feature type="binding site" evidence="1">
    <location>
        <position position="169"/>
    </location>
    <ligand>
        <name>2-oxoglutarate</name>
        <dbReference type="ChEBI" id="CHEBI:16810"/>
    </ligand>
</feature>
<gene>
    <name type="ordered locus">Reut_B4660</name>
</gene>
<proteinExistence type="inferred from homology"/>
<protein>
    <recommendedName>
        <fullName evidence="1">PKHD-type hydroxylase Reut_B4660</fullName>
        <ecNumber evidence="1">1.14.11.-</ecNumber>
    </recommendedName>
</protein>
<evidence type="ECO:0000255" key="1">
    <source>
        <dbReference type="HAMAP-Rule" id="MF_00657"/>
    </source>
</evidence>
<reference key="1">
    <citation type="journal article" date="2010" name="PLoS ONE">
        <title>The complete multipartite genome sequence of Cupriavidus necator JMP134, a versatile pollutant degrader.</title>
        <authorList>
            <person name="Lykidis A."/>
            <person name="Perez-Pantoja D."/>
            <person name="Ledger T."/>
            <person name="Mavromatis K."/>
            <person name="Anderson I.J."/>
            <person name="Ivanova N.N."/>
            <person name="Hooper S.D."/>
            <person name="Lapidus A."/>
            <person name="Lucas S."/>
            <person name="Gonzalez B."/>
            <person name="Kyrpides N.C."/>
        </authorList>
    </citation>
    <scope>NUCLEOTIDE SEQUENCE [LARGE SCALE GENOMIC DNA]</scope>
    <source>
        <strain>JMP134 / LMG 1197</strain>
    </source>
</reference>
<organism>
    <name type="scientific">Cupriavidus pinatubonensis (strain JMP 134 / LMG 1197)</name>
    <name type="common">Cupriavidus necator (strain JMP 134)</name>
    <dbReference type="NCBI Taxonomy" id="264198"/>
    <lineage>
        <taxon>Bacteria</taxon>
        <taxon>Pseudomonadati</taxon>
        <taxon>Pseudomonadota</taxon>
        <taxon>Betaproteobacteria</taxon>
        <taxon>Burkholderiales</taxon>
        <taxon>Burkholderiaceae</taxon>
        <taxon>Cupriavidus</taxon>
    </lineage>
</organism>
<dbReference type="EC" id="1.14.11.-" evidence="1"/>
<dbReference type="EMBL" id="CP000091">
    <property type="protein sequence ID" value="AAZ64009.1"/>
    <property type="molecule type" value="Genomic_DNA"/>
</dbReference>
<dbReference type="SMR" id="Q46S75"/>
<dbReference type="STRING" id="264198.Reut_B4660"/>
<dbReference type="DNASU" id="3614209"/>
<dbReference type="KEGG" id="reu:Reut_B4660"/>
<dbReference type="eggNOG" id="COG3128">
    <property type="taxonomic scope" value="Bacteria"/>
</dbReference>
<dbReference type="HOGENOM" id="CLU_106663_0_0_4"/>
<dbReference type="OrthoDB" id="9812472at2"/>
<dbReference type="GO" id="GO:0016706">
    <property type="term" value="F:2-oxoglutarate-dependent dioxygenase activity"/>
    <property type="evidence" value="ECO:0007669"/>
    <property type="project" value="UniProtKB-UniRule"/>
</dbReference>
<dbReference type="GO" id="GO:0005506">
    <property type="term" value="F:iron ion binding"/>
    <property type="evidence" value="ECO:0007669"/>
    <property type="project" value="UniProtKB-UniRule"/>
</dbReference>
<dbReference type="GO" id="GO:0031418">
    <property type="term" value="F:L-ascorbic acid binding"/>
    <property type="evidence" value="ECO:0007669"/>
    <property type="project" value="UniProtKB-KW"/>
</dbReference>
<dbReference type="GO" id="GO:0006974">
    <property type="term" value="P:DNA damage response"/>
    <property type="evidence" value="ECO:0007669"/>
    <property type="project" value="TreeGrafter"/>
</dbReference>
<dbReference type="GO" id="GO:0006879">
    <property type="term" value="P:intracellular iron ion homeostasis"/>
    <property type="evidence" value="ECO:0007669"/>
    <property type="project" value="TreeGrafter"/>
</dbReference>
<dbReference type="Gene3D" id="2.60.120.620">
    <property type="entry name" value="q2cbj1_9rhob like domain"/>
    <property type="match status" value="1"/>
</dbReference>
<dbReference type="Gene3D" id="4.10.860.20">
    <property type="entry name" value="Rabenosyn, Rab binding domain"/>
    <property type="match status" value="1"/>
</dbReference>
<dbReference type="HAMAP" id="MF_00657">
    <property type="entry name" value="Hydroxyl_YbiX"/>
    <property type="match status" value="1"/>
</dbReference>
<dbReference type="InterPro" id="IPR005123">
    <property type="entry name" value="Oxoglu/Fe-dep_dioxygenase_dom"/>
</dbReference>
<dbReference type="InterPro" id="IPR041097">
    <property type="entry name" value="PKHD_C"/>
</dbReference>
<dbReference type="InterPro" id="IPR023550">
    <property type="entry name" value="PKHD_hydroxylase"/>
</dbReference>
<dbReference type="InterPro" id="IPR006620">
    <property type="entry name" value="Pro_4_hyd_alph"/>
</dbReference>
<dbReference type="InterPro" id="IPR044862">
    <property type="entry name" value="Pro_4_hyd_alph_FE2OG_OXY"/>
</dbReference>
<dbReference type="NCBIfam" id="NF003973">
    <property type="entry name" value="PRK05467.1-2"/>
    <property type="match status" value="1"/>
</dbReference>
<dbReference type="NCBIfam" id="NF003974">
    <property type="entry name" value="PRK05467.1-3"/>
    <property type="match status" value="1"/>
</dbReference>
<dbReference type="NCBIfam" id="NF003975">
    <property type="entry name" value="PRK05467.1-4"/>
    <property type="match status" value="1"/>
</dbReference>
<dbReference type="PANTHER" id="PTHR41536">
    <property type="entry name" value="PKHD-TYPE HYDROXYLASE YBIX"/>
    <property type="match status" value="1"/>
</dbReference>
<dbReference type="PANTHER" id="PTHR41536:SF1">
    <property type="entry name" value="PKHD-TYPE HYDROXYLASE YBIX"/>
    <property type="match status" value="1"/>
</dbReference>
<dbReference type="Pfam" id="PF13640">
    <property type="entry name" value="2OG-FeII_Oxy_3"/>
    <property type="match status" value="1"/>
</dbReference>
<dbReference type="Pfam" id="PF18331">
    <property type="entry name" value="PKHD_C"/>
    <property type="match status" value="1"/>
</dbReference>
<dbReference type="SMART" id="SM00702">
    <property type="entry name" value="P4Hc"/>
    <property type="match status" value="1"/>
</dbReference>
<dbReference type="PROSITE" id="PS51471">
    <property type="entry name" value="FE2OG_OXY"/>
    <property type="match status" value="1"/>
</dbReference>
<accession>Q46S75</accession>
<sequence length="227" mass="25215">MMLQIPDVLSKAQVAQCRQMMDVADWTDGNATSGHQSALAKRNMQLPEGSPVARQIGDLIQDALGANATFFSAALPLKVFPPLFNRYEGGQAFDNHVDNAIRYLRGTGFRVRSDLSATLFLTEPQDYDGGELVIEDTYGQHRVKLPAGYMVLYPATSLHHVTPVTRGARVSSFFWIQSMVRDEGQRALLFELDTRIQQVAEEMGQKDSGVVGLTGVYHNLLRRWADA</sequence>